<sequence length="72" mass="8448">LIGVKTEHGYLLDKYTGCKVWCVINNESCNGECKRRGGYYGYCYFWKLACFCQGARKSELWHYETNKCNGRM</sequence>
<keyword id="KW-0044">Antibiotic</keyword>
<keyword id="KW-0929">Antimicrobial</keyword>
<keyword id="KW-0903">Direct protein sequencing</keyword>
<keyword id="KW-1015">Disulfide bond</keyword>
<keyword id="KW-0964">Secreted</keyword>
<keyword id="KW-0732">Signal</keyword>
<reference evidence="7" key="1">
    <citation type="submission" date="2009-11" db="EMBL/GenBank/DDBJ databases">
        <title>Molecular characterization of a sodium channel toxin from the scorpion Mesobuthus eupeus.</title>
        <authorList>
            <person name="Zhu S."/>
            <person name="Gao B."/>
        </authorList>
    </citation>
    <scope>NUCLEOTIDE SEQUENCE [MRNA]</scope>
    <source>
        <tissue>Venom gland</tissue>
    </source>
</reference>
<reference key="2">
    <citation type="journal article" date="2018" name="Amino Acids">
        <title>Meucin-49, a multifunctional scorpion venom peptide with bactericidal synergy with neurotoxins.</title>
        <authorList>
            <person name="Gao B."/>
            <person name="Dalziel J."/>
            <person name="Tanzi S."/>
            <person name="Zhu S."/>
        </authorList>
    </citation>
    <scope>NUCLEOTIDE SEQUENCE [MRNA] OF 7-72</scope>
    <scope>PROTEIN SEQUENCE OF 7-21</scope>
    <scope>FUNCTION</scope>
    <scope>MASS SPECTROMETRY</scope>
    <source>
        <tissue>Venom</tissue>
        <tissue>Venom gland</tissue>
    </source>
</reference>
<name>SCX4_MESEU</name>
<organism>
    <name type="scientific">Mesobuthus eupeus</name>
    <name type="common">Lesser Asian scorpion</name>
    <name type="synonym">Buthus eupeus</name>
    <dbReference type="NCBI Taxonomy" id="34648"/>
    <lineage>
        <taxon>Eukaryota</taxon>
        <taxon>Metazoa</taxon>
        <taxon>Ecdysozoa</taxon>
        <taxon>Arthropoda</taxon>
        <taxon>Chelicerata</taxon>
        <taxon>Arachnida</taxon>
        <taxon>Scorpiones</taxon>
        <taxon>Buthida</taxon>
        <taxon>Buthoidea</taxon>
        <taxon>Buthidae</taxon>
        <taxon>Mesobuthus</taxon>
    </lineage>
</organism>
<protein>
    <recommendedName>
        <fullName evidence="5">Antimicrobial peptide MeuNaTxbeta-4</fullName>
        <shortName evidence="5">MTbeta-4</shortName>
    </recommendedName>
    <alternativeName>
        <fullName evidence="7">Sodium channel toxin 17</fullName>
    </alternativeName>
</protein>
<evidence type="ECO:0000250" key="1">
    <source>
        <dbReference type="UniProtKB" id="P86406"/>
    </source>
</evidence>
<evidence type="ECO:0000255" key="2"/>
<evidence type="ECO:0000255" key="3">
    <source>
        <dbReference type="PROSITE-ProRule" id="PRU01210"/>
    </source>
</evidence>
<evidence type="ECO:0000269" key="4">
    <source>
    </source>
</evidence>
<evidence type="ECO:0000303" key="5">
    <source>
    </source>
</evidence>
<evidence type="ECO:0000305" key="6">
    <source>
    </source>
</evidence>
<evidence type="ECO:0000312" key="7">
    <source>
        <dbReference type="EMBL" id="ADT64282.1"/>
    </source>
</evidence>
<comment type="function">
    <text evidence="4">Antimicrobial peptide with weak activity against both Gram-positive and -negative bacteria (PubMed:29770866). Its antibiotic activity is potentiated by other antibacterial peptides such as Meucin-49 (PubMed:29770866).</text>
</comment>
<comment type="subcellular location">
    <subcellularLocation>
        <location evidence="4">Secreted</location>
    </subcellularLocation>
</comment>
<comment type="tissue specificity">
    <text evidence="6">Expressed by the venom gland.</text>
</comment>
<comment type="mass spectrometry" mass="7827.11" method="MALDI" evidence="4"/>
<comment type="similarity">
    <text evidence="2">Belongs to the long (4 C-C) scorpion toxin superfamily. Sodium channel inhibitor family.</text>
</comment>
<accession>R4H5E1</accession>
<proteinExistence type="evidence at protein level"/>
<dbReference type="EMBL" id="GU187959">
    <property type="protein sequence ID" value="ADT64282.1"/>
    <property type="molecule type" value="mRNA"/>
</dbReference>
<dbReference type="GO" id="GO:0005576">
    <property type="term" value="C:extracellular region"/>
    <property type="evidence" value="ECO:0007669"/>
    <property type="project" value="UniProtKB-SubCell"/>
</dbReference>
<dbReference type="GO" id="GO:0019871">
    <property type="term" value="F:sodium channel inhibitor activity"/>
    <property type="evidence" value="ECO:0007669"/>
    <property type="project" value="InterPro"/>
</dbReference>
<dbReference type="GO" id="GO:0090729">
    <property type="term" value="F:toxin activity"/>
    <property type="evidence" value="ECO:0007669"/>
    <property type="project" value="InterPro"/>
</dbReference>
<dbReference type="GO" id="GO:0042742">
    <property type="term" value="P:defense response to bacterium"/>
    <property type="evidence" value="ECO:0007669"/>
    <property type="project" value="UniProtKB-KW"/>
</dbReference>
<dbReference type="CDD" id="cd23106">
    <property type="entry name" value="neurotoxins_LC_scorpion"/>
    <property type="match status" value="1"/>
</dbReference>
<dbReference type="Gene3D" id="3.30.30.10">
    <property type="entry name" value="Knottin, scorpion toxin-like"/>
    <property type="match status" value="1"/>
</dbReference>
<dbReference type="InterPro" id="IPR044062">
    <property type="entry name" value="LCN-type_CS_alpha_beta_dom"/>
</dbReference>
<dbReference type="InterPro" id="IPR003614">
    <property type="entry name" value="Scorpion_toxin-like"/>
</dbReference>
<dbReference type="InterPro" id="IPR036574">
    <property type="entry name" value="Scorpion_toxin-like_sf"/>
</dbReference>
<dbReference type="InterPro" id="IPR018218">
    <property type="entry name" value="Scorpion_toxinL"/>
</dbReference>
<dbReference type="InterPro" id="IPR002061">
    <property type="entry name" value="Scorpion_toxinL/defensin"/>
</dbReference>
<dbReference type="Pfam" id="PF00537">
    <property type="entry name" value="Toxin_3"/>
    <property type="match status" value="1"/>
</dbReference>
<dbReference type="PRINTS" id="PR00285">
    <property type="entry name" value="SCORPNTOXIN"/>
</dbReference>
<dbReference type="SMART" id="SM00505">
    <property type="entry name" value="Knot1"/>
    <property type="match status" value="1"/>
</dbReference>
<dbReference type="SUPFAM" id="SSF57095">
    <property type="entry name" value="Scorpion toxin-like"/>
    <property type="match status" value="1"/>
</dbReference>
<dbReference type="PROSITE" id="PS51863">
    <property type="entry name" value="LCN_CSAB"/>
    <property type="match status" value="1"/>
</dbReference>
<feature type="signal peptide" evidence="1">
    <location>
        <begin position="1" status="less than"/>
        <end position="5"/>
    </location>
</feature>
<feature type="peptide" id="PRO_0000461885" description="Antimicrobial peptide MeuNaTxbeta-4">
    <location>
        <begin position="6"/>
        <end position="72"/>
    </location>
</feature>
<feature type="domain" description="LCN-type CS-alpha/beta" evidence="3">
    <location>
        <begin position="7"/>
        <end position="69"/>
    </location>
</feature>
<feature type="disulfide bond" evidence="3">
    <location>
        <begin position="18"/>
        <end position="68"/>
    </location>
</feature>
<feature type="disulfide bond" evidence="3">
    <location>
        <begin position="22"/>
        <end position="43"/>
    </location>
</feature>
<feature type="disulfide bond" evidence="3">
    <location>
        <begin position="29"/>
        <end position="50"/>
    </location>
</feature>
<feature type="disulfide bond" evidence="3">
    <location>
        <begin position="33"/>
        <end position="52"/>
    </location>
</feature>
<feature type="non-terminal residue" evidence="7">
    <location>
        <position position="1"/>
    </location>
</feature>